<protein>
    <recommendedName>
        <fullName evidence="1">Glutamyl-tRNA(Gln) amidotransferase subunit A</fullName>
        <shortName evidence="1">Glu-ADT subunit A</shortName>
        <ecNumber evidence="1">6.3.5.7</ecNumber>
    </recommendedName>
</protein>
<keyword id="KW-0067">ATP-binding</keyword>
<keyword id="KW-0436">Ligase</keyword>
<keyword id="KW-0547">Nucleotide-binding</keyword>
<keyword id="KW-0648">Protein biosynthesis</keyword>
<keyword id="KW-1185">Reference proteome</keyword>
<dbReference type="EC" id="6.3.5.7" evidence="1"/>
<dbReference type="EMBL" id="CP000478">
    <property type="protein sequence ID" value="ABK19174.1"/>
    <property type="molecule type" value="Genomic_DNA"/>
</dbReference>
<dbReference type="RefSeq" id="WP_011700299.1">
    <property type="nucleotide sequence ID" value="NC_008554.1"/>
</dbReference>
<dbReference type="SMR" id="A0LP22"/>
<dbReference type="STRING" id="335543.Sfum_3503"/>
<dbReference type="KEGG" id="sfu:Sfum_3503"/>
<dbReference type="eggNOG" id="COG0154">
    <property type="taxonomic scope" value="Bacteria"/>
</dbReference>
<dbReference type="HOGENOM" id="CLU_009600_0_3_7"/>
<dbReference type="InParanoid" id="A0LP22"/>
<dbReference type="OrthoDB" id="9811471at2"/>
<dbReference type="Proteomes" id="UP000001784">
    <property type="component" value="Chromosome"/>
</dbReference>
<dbReference type="GO" id="GO:0030956">
    <property type="term" value="C:glutamyl-tRNA(Gln) amidotransferase complex"/>
    <property type="evidence" value="ECO:0007669"/>
    <property type="project" value="InterPro"/>
</dbReference>
<dbReference type="GO" id="GO:0005524">
    <property type="term" value="F:ATP binding"/>
    <property type="evidence" value="ECO:0007669"/>
    <property type="project" value="UniProtKB-KW"/>
</dbReference>
<dbReference type="GO" id="GO:0050567">
    <property type="term" value="F:glutaminyl-tRNA synthase (glutamine-hydrolyzing) activity"/>
    <property type="evidence" value="ECO:0007669"/>
    <property type="project" value="UniProtKB-UniRule"/>
</dbReference>
<dbReference type="GO" id="GO:0006412">
    <property type="term" value="P:translation"/>
    <property type="evidence" value="ECO:0007669"/>
    <property type="project" value="UniProtKB-UniRule"/>
</dbReference>
<dbReference type="Gene3D" id="3.90.1300.10">
    <property type="entry name" value="Amidase signature (AS) domain"/>
    <property type="match status" value="1"/>
</dbReference>
<dbReference type="HAMAP" id="MF_00120">
    <property type="entry name" value="GatA"/>
    <property type="match status" value="1"/>
</dbReference>
<dbReference type="InterPro" id="IPR000120">
    <property type="entry name" value="Amidase"/>
</dbReference>
<dbReference type="InterPro" id="IPR020556">
    <property type="entry name" value="Amidase_CS"/>
</dbReference>
<dbReference type="InterPro" id="IPR023631">
    <property type="entry name" value="Amidase_dom"/>
</dbReference>
<dbReference type="InterPro" id="IPR036928">
    <property type="entry name" value="AS_sf"/>
</dbReference>
<dbReference type="InterPro" id="IPR004412">
    <property type="entry name" value="GatA"/>
</dbReference>
<dbReference type="NCBIfam" id="TIGR00132">
    <property type="entry name" value="gatA"/>
    <property type="match status" value="1"/>
</dbReference>
<dbReference type="PANTHER" id="PTHR11895:SF151">
    <property type="entry name" value="GLUTAMYL-TRNA(GLN) AMIDOTRANSFERASE SUBUNIT A"/>
    <property type="match status" value="1"/>
</dbReference>
<dbReference type="PANTHER" id="PTHR11895">
    <property type="entry name" value="TRANSAMIDASE"/>
    <property type="match status" value="1"/>
</dbReference>
<dbReference type="Pfam" id="PF01425">
    <property type="entry name" value="Amidase"/>
    <property type="match status" value="1"/>
</dbReference>
<dbReference type="SUPFAM" id="SSF75304">
    <property type="entry name" value="Amidase signature (AS) enzymes"/>
    <property type="match status" value="1"/>
</dbReference>
<dbReference type="PROSITE" id="PS00571">
    <property type="entry name" value="AMIDASES"/>
    <property type="match status" value="1"/>
</dbReference>
<organism>
    <name type="scientific">Syntrophobacter fumaroxidans (strain DSM 10017 / MPOB)</name>
    <dbReference type="NCBI Taxonomy" id="335543"/>
    <lineage>
        <taxon>Bacteria</taxon>
        <taxon>Pseudomonadati</taxon>
        <taxon>Thermodesulfobacteriota</taxon>
        <taxon>Syntrophobacteria</taxon>
        <taxon>Syntrophobacterales</taxon>
        <taxon>Syntrophobacteraceae</taxon>
        <taxon>Syntrophobacter</taxon>
    </lineage>
</organism>
<accession>A0LP22</accession>
<evidence type="ECO:0000255" key="1">
    <source>
        <dbReference type="HAMAP-Rule" id="MF_00120"/>
    </source>
</evidence>
<name>GATA_SYNFM</name>
<gene>
    <name evidence="1" type="primary">gatA</name>
    <name type="ordered locus">Sfum_3503</name>
</gene>
<comment type="function">
    <text evidence="1">Allows the formation of correctly charged Gln-tRNA(Gln) through the transamidation of misacylated Glu-tRNA(Gln) in organisms which lack glutaminyl-tRNA synthetase. The reaction takes place in the presence of glutamine and ATP through an activated gamma-phospho-Glu-tRNA(Gln).</text>
</comment>
<comment type="catalytic activity">
    <reaction evidence="1">
        <text>L-glutamyl-tRNA(Gln) + L-glutamine + ATP + H2O = L-glutaminyl-tRNA(Gln) + L-glutamate + ADP + phosphate + H(+)</text>
        <dbReference type="Rhea" id="RHEA:17521"/>
        <dbReference type="Rhea" id="RHEA-COMP:9681"/>
        <dbReference type="Rhea" id="RHEA-COMP:9684"/>
        <dbReference type="ChEBI" id="CHEBI:15377"/>
        <dbReference type="ChEBI" id="CHEBI:15378"/>
        <dbReference type="ChEBI" id="CHEBI:29985"/>
        <dbReference type="ChEBI" id="CHEBI:30616"/>
        <dbReference type="ChEBI" id="CHEBI:43474"/>
        <dbReference type="ChEBI" id="CHEBI:58359"/>
        <dbReference type="ChEBI" id="CHEBI:78520"/>
        <dbReference type="ChEBI" id="CHEBI:78521"/>
        <dbReference type="ChEBI" id="CHEBI:456216"/>
        <dbReference type="EC" id="6.3.5.7"/>
    </reaction>
</comment>
<comment type="subunit">
    <text evidence="1">Heterotrimer of A, B and C subunits.</text>
</comment>
<comment type="similarity">
    <text evidence="1">Belongs to the amidase family. GatA subfamily.</text>
</comment>
<feature type="chain" id="PRO_1000015920" description="Glutamyl-tRNA(Gln) amidotransferase subunit A">
    <location>
        <begin position="1"/>
        <end position="486"/>
    </location>
</feature>
<feature type="active site" description="Charge relay system" evidence="1">
    <location>
        <position position="78"/>
    </location>
</feature>
<feature type="active site" description="Charge relay system" evidence="1">
    <location>
        <position position="153"/>
    </location>
</feature>
<feature type="active site" description="Acyl-ester intermediate" evidence="1">
    <location>
        <position position="177"/>
    </location>
</feature>
<sequence length="486" mass="52331">MEPYALTMHELHDLLVRKELSVTETLTSFLTRIETLDPRLNSYLSVLAESSLAEAGRFDRGERDLHASPLAGIPLAIKDVLCMQGTVTTCGSRILENFVPPYDGTVIARLREAGAIFLGKTNMDEFAMGSSTENSAYGVTRNPWDRERVPGGSSGGSAAAVAADLCSGSLGTDTGGSIRQPASFCGVVGLKPTYGRVSRFGLVAFASSLDQIGPITKDVEDAAILLQAIAGHDRRDSTSVDHPVPDYRASLREPIKGLRLGIPKEYFVHGMHPEIADSVQRAINVCLQLGAEVGEVSLPHTGYGVAAYYIIAPAEASSNLARYDGVKYGLRVPDARDLIGMYRTSRSQGFGAEVKRRIMLGTYVLSAGYYDAYYTKASQARTLIRKDFLDAFDSFDALLAPVAPVPAFKIGEKSDDPLQMYLNDALTLPASLAGVPGISVPCGFSGEGLPIGLQILGPHFREDLLLRIAYQFEQATAHHLARPDSI</sequence>
<reference key="1">
    <citation type="submission" date="2006-10" db="EMBL/GenBank/DDBJ databases">
        <title>Complete sequence of Syntrophobacter fumaroxidans MPOB.</title>
        <authorList>
            <consortium name="US DOE Joint Genome Institute"/>
            <person name="Copeland A."/>
            <person name="Lucas S."/>
            <person name="Lapidus A."/>
            <person name="Barry K."/>
            <person name="Detter J.C."/>
            <person name="Glavina del Rio T."/>
            <person name="Hammon N."/>
            <person name="Israni S."/>
            <person name="Pitluck S."/>
            <person name="Goltsman E.G."/>
            <person name="Martinez M."/>
            <person name="Schmutz J."/>
            <person name="Larimer F."/>
            <person name="Land M."/>
            <person name="Hauser L."/>
            <person name="Kyrpides N."/>
            <person name="Kim E."/>
            <person name="Boone D.R."/>
            <person name="Brockman F."/>
            <person name="Culley D."/>
            <person name="Ferry J."/>
            <person name="Gunsalus R."/>
            <person name="McInerney M.J."/>
            <person name="Morrison M."/>
            <person name="Plugge C."/>
            <person name="Rohlin L."/>
            <person name="Scholten J."/>
            <person name="Sieber J."/>
            <person name="Stams A.J.M."/>
            <person name="Worm P."/>
            <person name="Henstra A.M."/>
            <person name="Richardson P."/>
        </authorList>
    </citation>
    <scope>NUCLEOTIDE SEQUENCE [LARGE SCALE GENOMIC DNA]</scope>
    <source>
        <strain>DSM 10017 / MPOB</strain>
    </source>
</reference>
<proteinExistence type="inferred from homology"/>